<protein>
    <recommendedName>
        <fullName evidence="1">Elongation factor P</fullName>
        <shortName evidence="1">EF-P</shortName>
    </recommendedName>
</protein>
<accession>Q72JL2</accession>
<sequence length="184" mass="20225">MISVTDLRPGTKVKMDGGLWECVEYQHQKLGRGGAKVVAKFKNLETGATVERTFNSGEKLEDIYVETRELQYLYPEGEEMVFMDLETYEQFAVPRSRVVGAEFFKEGMTALGDMYEGQPIKVTPPTVVELKVVDTPPGVRGDTVSGGSKPATLETGAVVQVPLFVEPGEVIKVDTRTGEYVGRA</sequence>
<gene>
    <name evidence="1" type="primary">efp</name>
    <name type="ordered locus">TT_C0760</name>
</gene>
<dbReference type="EMBL" id="AE017221">
    <property type="protein sequence ID" value="AAS81106.1"/>
    <property type="molecule type" value="Genomic_DNA"/>
</dbReference>
<dbReference type="RefSeq" id="WP_011173195.1">
    <property type="nucleotide sequence ID" value="NC_005835.1"/>
</dbReference>
<dbReference type="SMR" id="Q72JL2"/>
<dbReference type="GeneID" id="3169027"/>
<dbReference type="KEGG" id="tth:TT_C0760"/>
<dbReference type="eggNOG" id="COG0231">
    <property type="taxonomic scope" value="Bacteria"/>
</dbReference>
<dbReference type="HOGENOM" id="CLU_074944_0_1_0"/>
<dbReference type="OrthoDB" id="9801844at2"/>
<dbReference type="UniPathway" id="UPA00345"/>
<dbReference type="Proteomes" id="UP000000592">
    <property type="component" value="Chromosome"/>
</dbReference>
<dbReference type="GO" id="GO:0005737">
    <property type="term" value="C:cytoplasm"/>
    <property type="evidence" value="ECO:0007669"/>
    <property type="project" value="UniProtKB-SubCell"/>
</dbReference>
<dbReference type="GO" id="GO:0003746">
    <property type="term" value="F:translation elongation factor activity"/>
    <property type="evidence" value="ECO:0007669"/>
    <property type="project" value="UniProtKB-UniRule"/>
</dbReference>
<dbReference type="GO" id="GO:0043043">
    <property type="term" value="P:peptide biosynthetic process"/>
    <property type="evidence" value="ECO:0007669"/>
    <property type="project" value="InterPro"/>
</dbReference>
<dbReference type="CDD" id="cd04470">
    <property type="entry name" value="S1_EF-P_repeat_1"/>
    <property type="match status" value="1"/>
</dbReference>
<dbReference type="CDD" id="cd05794">
    <property type="entry name" value="S1_EF-P_repeat_2"/>
    <property type="match status" value="1"/>
</dbReference>
<dbReference type="FunFam" id="2.30.30.30:FF:000003">
    <property type="entry name" value="Elongation factor P"/>
    <property type="match status" value="1"/>
</dbReference>
<dbReference type="FunFam" id="2.40.50.140:FF:000004">
    <property type="entry name" value="Elongation factor P"/>
    <property type="match status" value="1"/>
</dbReference>
<dbReference type="FunFam" id="2.40.50.140:FF:000009">
    <property type="entry name" value="Elongation factor P"/>
    <property type="match status" value="1"/>
</dbReference>
<dbReference type="Gene3D" id="2.30.30.30">
    <property type="match status" value="1"/>
</dbReference>
<dbReference type="Gene3D" id="2.40.50.140">
    <property type="entry name" value="Nucleic acid-binding proteins"/>
    <property type="match status" value="2"/>
</dbReference>
<dbReference type="HAMAP" id="MF_00141">
    <property type="entry name" value="EF_P"/>
    <property type="match status" value="1"/>
</dbReference>
<dbReference type="InterPro" id="IPR015365">
    <property type="entry name" value="Elong-fact-P_C"/>
</dbReference>
<dbReference type="InterPro" id="IPR012340">
    <property type="entry name" value="NA-bd_OB-fold"/>
</dbReference>
<dbReference type="InterPro" id="IPR014722">
    <property type="entry name" value="Rib_uL2_dom2"/>
</dbReference>
<dbReference type="InterPro" id="IPR020599">
    <property type="entry name" value="Transl_elong_fac_P/YeiP"/>
</dbReference>
<dbReference type="InterPro" id="IPR013185">
    <property type="entry name" value="Transl_elong_KOW-like"/>
</dbReference>
<dbReference type="InterPro" id="IPR001059">
    <property type="entry name" value="Transl_elong_P/YeiP_cen"/>
</dbReference>
<dbReference type="InterPro" id="IPR013852">
    <property type="entry name" value="Transl_elong_P/YeiP_CS"/>
</dbReference>
<dbReference type="InterPro" id="IPR011768">
    <property type="entry name" value="Transl_elongation_fac_P"/>
</dbReference>
<dbReference type="InterPro" id="IPR008991">
    <property type="entry name" value="Translation_prot_SH3-like_sf"/>
</dbReference>
<dbReference type="NCBIfam" id="TIGR00038">
    <property type="entry name" value="efp"/>
    <property type="match status" value="1"/>
</dbReference>
<dbReference type="NCBIfam" id="NF001810">
    <property type="entry name" value="PRK00529.1"/>
    <property type="match status" value="1"/>
</dbReference>
<dbReference type="PANTHER" id="PTHR30053">
    <property type="entry name" value="ELONGATION FACTOR P"/>
    <property type="match status" value="1"/>
</dbReference>
<dbReference type="PANTHER" id="PTHR30053:SF12">
    <property type="entry name" value="ELONGATION FACTOR P (EF-P) FAMILY PROTEIN"/>
    <property type="match status" value="1"/>
</dbReference>
<dbReference type="Pfam" id="PF01132">
    <property type="entry name" value="EFP"/>
    <property type="match status" value="1"/>
</dbReference>
<dbReference type="Pfam" id="PF08207">
    <property type="entry name" value="EFP_N"/>
    <property type="match status" value="1"/>
</dbReference>
<dbReference type="Pfam" id="PF09285">
    <property type="entry name" value="Elong-fact-P_C"/>
    <property type="match status" value="1"/>
</dbReference>
<dbReference type="PIRSF" id="PIRSF005901">
    <property type="entry name" value="EF-P"/>
    <property type="match status" value="1"/>
</dbReference>
<dbReference type="SMART" id="SM01185">
    <property type="entry name" value="EFP"/>
    <property type="match status" value="1"/>
</dbReference>
<dbReference type="SMART" id="SM00841">
    <property type="entry name" value="Elong-fact-P_C"/>
    <property type="match status" value="1"/>
</dbReference>
<dbReference type="SUPFAM" id="SSF50249">
    <property type="entry name" value="Nucleic acid-binding proteins"/>
    <property type="match status" value="2"/>
</dbReference>
<dbReference type="SUPFAM" id="SSF50104">
    <property type="entry name" value="Translation proteins SH3-like domain"/>
    <property type="match status" value="1"/>
</dbReference>
<dbReference type="PROSITE" id="PS01275">
    <property type="entry name" value="EFP"/>
    <property type="match status" value="1"/>
</dbReference>
<evidence type="ECO:0000255" key="1">
    <source>
        <dbReference type="HAMAP-Rule" id="MF_00141"/>
    </source>
</evidence>
<organism>
    <name type="scientific">Thermus thermophilus (strain ATCC BAA-163 / DSM 7039 / HB27)</name>
    <dbReference type="NCBI Taxonomy" id="262724"/>
    <lineage>
        <taxon>Bacteria</taxon>
        <taxon>Thermotogati</taxon>
        <taxon>Deinococcota</taxon>
        <taxon>Deinococci</taxon>
        <taxon>Thermales</taxon>
        <taxon>Thermaceae</taxon>
        <taxon>Thermus</taxon>
    </lineage>
</organism>
<keyword id="KW-0963">Cytoplasm</keyword>
<keyword id="KW-0251">Elongation factor</keyword>
<keyword id="KW-0648">Protein biosynthesis</keyword>
<comment type="function">
    <text evidence="1">Involved in peptide bond synthesis. Stimulates efficient translation and peptide-bond synthesis on native or reconstituted 70S ribosomes in vitro. Probably functions indirectly by altering the affinity of the ribosome for aminoacyl-tRNA, thus increasing their reactivity as acceptors for peptidyl transferase.</text>
</comment>
<comment type="pathway">
    <text evidence="1">Protein biosynthesis; polypeptide chain elongation.</text>
</comment>
<comment type="subcellular location">
    <subcellularLocation>
        <location evidence="1">Cytoplasm</location>
    </subcellularLocation>
</comment>
<comment type="similarity">
    <text evidence="1">Belongs to the elongation factor P family.</text>
</comment>
<reference key="1">
    <citation type="journal article" date="2004" name="Nat. Biotechnol.">
        <title>The genome sequence of the extreme thermophile Thermus thermophilus.</title>
        <authorList>
            <person name="Henne A."/>
            <person name="Brueggemann H."/>
            <person name="Raasch C."/>
            <person name="Wiezer A."/>
            <person name="Hartsch T."/>
            <person name="Liesegang H."/>
            <person name="Johann A."/>
            <person name="Lienard T."/>
            <person name="Gohl O."/>
            <person name="Martinez-Arias R."/>
            <person name="Jacobi C."/>
            <person name="Starkuviene V."/>
            <person name="Schlenczeck S."/>
            <person name="Dencker S."/>
            <person name="Huber R."/>
            <person name="Klenk H.-P."/>
            <person name="Kramer W."/>
            <person name="Merkl R."/>
            <person name="Gottschalk G."/>
            <person name="Fritz H.-J."/>
        </authorList>
    </citation>
    <scope>NUCLEOTIDE SEQUENCE [LARGE SCALE GENOMIC DNA]</scope>
    <source>
        <strain>ATCC BAA-163 / DSM 7039 / HB27</strain>
    </source>
</reference>
<name>EFP_THET2</name>
<feature type="chain" id="PRO_0000094356" description="Elongation factor P">
    <location>
        <begin position="1"/>
        <end position="184"/>
    </location>
</feature>
<proteinExistence type="inferred from homology"/>